<proteinExistence type="inferred from homology"/>
<protein>
    <recommendedName>
        <fullName evidence="2">ATP-dependent DNA helicase chl1</fullName>
        <ecNumber evidence="3">5.6.2.3</ecNumber>
    </recommendedName>
    <alternativeName>
        <fullName evidence="2">Chromosome loss protein 1</fullName>
    </alternativeName>
    <alternativeName>
        <fullName evidence="6">DNA 5'-3' helicase chl1</fullName>
    </alternativeName>
</protein>
<accession>A7UXD4</accession>
<dbReference type="EC" id="5.6.2.3" evidence="3"/>
<dbReference type="EMBL" id="CM002242">
    <property type="protein sequence ID" value="EDO65430.2"/>
    <property type="molecule type" value="Genomic_DNA"/>
</dbReference>
<dbReference type="RefSeq" id="XP_001728521.2">
    <property type="nucleotide sequence ID" value="XM_001728469.2"/>
</dbReference>
<dbReference type="SMR" id="A7UXD4"/>
<dbReference type="FunCoup" id="A7UXD4">
    <property type="interactions" value="933"/>
</dbReference>
<dbReference type="STRING" id="367110.A7UXD4"/>
<dbReference type="PaxDb" id="5141-EFNCRP00000009337"/>
<dbReference type="EnsemblFungi" id="EDO65430">
    <property type="protein sequence ID" value="EDO65430"/>
    <property type="gene ID" value="NCU11409"/>
</dbReference>
<dbReference type="GeneID" id="5847921"/>
<dbReference type="KEGG" id="ncr:NCU11409"/>
<dbReference type="VEuPathDB" id="FungiDB:NCU11409"/>
<dbReference type="HOGENOM" id="CLU_006515_2_0_1"/>
<dbReference type="InParanoid" id="A7UXD4"/>
<dbReference type="OrthoDB" id="267079at2759"/>
<dbReference type="Proteomes" id="UP000001805">
    <property type="component" value="Chromosome 7, Linkage Group VII"/>
</dbReference>
<dbReference type="GO" id="GO:0005634">
    <property type="term" value="C:nucleus"/>
    <property type="evidence" value="ECO:0000318"/>
    <property type="project" value="GO_Central"/>
</dbReference>
<dbReference type="GO" id="GO:0005524">
    <property type="term" value="F:ATP binding"/>
    <property type="evidence" value="ECO:0007669"/>
    <property type="project" value="UniProtKB-KW"/>
</dbReference>
<dbReference type="GO" id="GO:0016887">
    <property type="term" value="F:ATP hydrolysis activity"/>
    <property type="evidence" value="ECO:0007669"/>
    <property type="project" value="RHEA"/>
</dbReference>
<dbReference type="GO" id="GO:0003677">
    <property type="term" value="F:DNA binding"/>
    <property type="evidence" value="ECO:0007669"/>
    <property type="project" value="UniProtKB-KW"/>
</dbReference>
<dbReference type="GO" id="GO:0003678">
    <property type="term" value="F:DNA helicase activity"/>
    <property type="evidence" value="ECO:0000318"/>
    <property type="project" value="GO_Central"/>
</dbReference>
<dbReference type="GO" id="GO:0051536">
    <property type="term" value="F:iron-sulfur cluster binding"/>
    <property type="evidence" value="ECO:0007669"/>
    <property type="project" value="UniProtKB-KW"/>
</dbReference>
<dbReference type="GO" id="GO:0046872">
    <property type="term" value="F:metal ion binding"/>
    <property type="evidence" value="ECO:0007669"/>
    <property type="project" value="UniProtKB-KW"/>
</dbReference>
<dbReference type="GO" id="GO:0034085">
    <property type="term" value="P:establishment of sister chromatid cohesion"/>
    <property type="evidence" value="ECO:0000318"/>
    <property type="project" value="GO_Central"/>
</dbReference>
<dbReference type="GO" id="GO:0006139">
    <property type="term" value="P:nucleobase-containing compound metabolic process"/>
    <property type="evidence" value="ECO:0007669"/>
    <property type="project" value="InterPro"/>
</dbReference>
<dbReference type="CDD" id="cd18788">
    <property type="entry name" value="SF2_C_XPD"/>
    <property type="match status" value="1"/>
</dbReference>
<dbReference type="FunFam" id="3.40.50.300:FF:002774">
    <property type="entry name" value="ATP-dependent DNA helicase chl1"/>
    <property type="match status" value="1"/>
</dbReference>
<dbReference type="Gene3D" id="3.40.50.300">
    <property type="entry name" value="P-loop containing nucleotide triphosphate hydrolases"/>
    <property type="match status" value="3"/>
</dbReference>
<dbReference type="InterPro" id="IPR006555">
    <property type="entry name" value="ATP-dep_Helicase_C"/>
</dbReference>
<dbReference type="InterPro" id="IPR045028">
    <property type="entry name" value="DinG/Rad3-like"/>
</dbReference>
<dbReference type="InterPro" id="IPR014013">
    <property type="entry name" value="Helic_SF1/SF2_ATP-bd_DinG/Rad3"/>
</dbReference>
<dbReference type="InterPro" id="IPR006554">
    <property type="entry name" value="Helicase-like_DEXD_c2"/>
</dbReference>
<dbReference type="InterPro" id="IPR027417">
    <property type="entry name" value="P-loop_NTPase"/>
</dbReference>
<dbReference type="InterPro" id="IPR010614">
    <property type="entry name" value="RAD3-like_helicase_DEAD"/>
</dbReference>
<dbReference type="InterPro" id="IPR013020">
    <property type="entry name" value="Rad3/Chl1-like"/>
</dbReference>
<dbReference type="NCBIfam" id="TIGR00604">
    <property type="entry name" value="rad3"/>
    <property type="match status" value="1"/>
</dbReference>
<dbReference type="PANTHER" id="PTHR11472:SF41">
    <property type="entry name" value="ATP-DEPENDENT DNA HELICASE DDX11-RELATED"/>
    <property type="match status" value="1"/>
</dbReference>
<dbReference type="PANTHER" id="PTHR11472">
    <property type="entry name" value="DNA REPAIR DEAD HELICASE RAD3/XP-D SUBFAMILY MEMBER"/>
    <property type="match status" value="1"/>
</dbReference>
<dbReference type="Pfam" id="PF06733">
    <property type="entry name" value="DEAD_2"/>
    <property type="match status" value="1"/>
</dbReference>
<dbReference type="Pfam" id="PF13307">
    <property type="entry name" value="Helicase_C_2"/>
    <property type="match status" value="1"/>
</dbReference>
<dbReference type="SMART" id="SM00488">
    <property type="entry name" value="DEXDc2"/>
    <property type="match status" value="1"/>
</dbReference>
<dbReference type="SMART" id="SM00491">
    <property type="entry name" value="HELICc2"/>
    <property type="match status" value="1"/>
</dbReference>
<dbReference type="PROSITE" id="PS00449">
    <property type="entry name" value="ATPASE_A"/>
    <property type="match status" value="1"/>
</dbReference>
<dbReference type="PROSITE" id="PS51193">
    <property type="entry name" value="HELICASE_ATP_BIND_2"/>
    <property type="match status" value="1"/>
</dbReference>
<keyword id="KW-0067">ATP-binding</keyword>
<keyword id="KW-0131">Cell cycle</keyword>
<keyword id="KW-0238">DNA-binding</keyword>
<keyword id="KW-0347">Helicase</keyword>
<keyword id="KW-0378">Hydrolase</keyword>
<keyword id="KW-0408">Iron</keyword>
<keyword id="KW-0411">Iron-sulfur</keyword>
<keyword id="KW-0413">Isomerase</keyword>
<keyword id="KW-0479">Metal-binding</keyword>
<keyword id="KW-0547">Nucleotide-binding</keyword>
<keyword id="KW-0539">Nucleus</keyword>
<keyword id="KW-1185">Reference proteome</keyword>
<evidence type="ECO:0000250" key="1">
    <source>
        <dbReference type="UniProtKB" id="P18074"/>
    </source>
</evidence>
<evidence type="ECO:0000250" key="2">
    <source>
        <dbReference type="UniProtKB" id="P22516"/>
    </source>
</evidence>
<evidence type="ECO:0000250" key="3">
    <source>
        <dbReference type="UniProtKB" id="Q96FC9"/>
    </source>
</evidence>
<evidence type="ECO:0000255" key="4">
    <source>
        <dbReference type="PROSITE-ProRule" id="PRU00541"/>
    </source>
</evidence>
<evidence type="ECO:0000256" key="5">
    <source>
        <dbReference type="SAM" id="MobiDB-lite"/>
    </source>
</evidence>
<evidence type="ECO:0000305" key="6"/>
<name>CHL1_NEUCR</name>
<gene>
    <name type="primary">chl1</name>
    <name type="ORF">NCU11409</name>
</gene>
<comment type="function">
    <text evidence="2">ATP-dependent DNA helicase important for chromosome transmission and normal cell cycle progression in G(2)/M (By similarity). May have a role in changing DNA topology to allow the loading of proteins involved in maintaining sister chromatid cohesion in the vicinity of the centromeres (By similarity). Has a specific role in chromosome segregation during meiosis II (By similarity).</text>
</comment>
<comment type="catalytic activity">
    <reaction evidence="3">
        <text>Couples ATP hydrolysis with the unwinding of duplex DNA at the replication fork by translocating in the 5'-3' direction. This creates two antiparallel DNA single strands (ssDNA). The leading ssDNA polymer is the template for DNA polymerase III holoenzyme which synthesizes a continuous strand.</text>
        <dbReference type="EC" id="5.6.2.3"/>
    </reaction>
</comment>
<comment type="catalytic activity">
    <reaction evidence="3">
        <text>ATP + H2O = ADP + phosphate + H(+)</text>
        <dbReference type="Rhea" id="RHEA:13065"/>
        <dbReference type="ChEBI" id="CHEBI:15377"/>
        <dbReference type="ChEBI" id="CHEBI:15378"/>
        <dbReference type="ChEBI" id="CHEBI:30616"/>
        <dbReference type="ChEBI" id="CHEBI:43474"/>
        <dbReference type="ChEBI" id="CHEBI:456216"/>
        <dbReference type="EC" id="5.6.2.3"/>
    </reaction>
</comment>
<comment type="cofactor">
    <cofactor evidence="1">
        <name>[4Fe-4S] cluster</name>
        <dbReference type="ChEBI" id="CHEBI:49883"/>
    </cofactor>
    <text evidence="1">Binds 1 [4Fe-4S] cluster.</text>
</comment>
<comment type="subcellular location">
    <subcellularLocation>
        <location evidence="2">Nucleus</location>
    </subcellularLocation>
</comment>
<comment type="similarity">
    <text evidence="6">Belongs to the DEAD box helicase family. DEAH subfamily. DDX11/CHL1 sub-subfamily.</text>
</comment>
<feature type="chain" id="PRO_0000351013" description="ATP-dependent DNA helicase chl1">
    <location>
        <begin position="1"/>
        <end position="1068"/>
    </location>
</feature>
<feature type="domain" description="Helicase ATP-binding" evidence="4">
    <location>
        <begin position="31"/>
        <end position="556"/>
    </location>
</feature>
<feature type="region of interest" description="Disordered" evidence="5">
    <location>
        <begin position="85"/>
        <end position="147"/>
    </location>
</feature>
<feature type="region of interest" description="Disordered" evidence="5">
    <location>
        <begin position="228"/>
        <end position="282"/>
    </location>
</feature>
<feature type="region of interest" description="Disordered" evidence="5">
    <location>
        <begin position="933"/>
        <end position="974"/>
    </location>
</feature>
<feature type="short sequence motif" description="DEAH box">
    <location>
        <begin position="502"/>
        <end position="505"/>
    </location>
</feature>
<feature type="compositionally biased region" description="Low complexity" evidence="5">
    <location>
        <begin position="85"/>
        <end position="96"/>
    </location>
</feature>
<feature type="compositionally biased region" description="Polar residues" evidence="5">
    <location>
        <begin position="119"/>
        <end position="128"/>
    </location>
</feature>
<feature type="compositionally biased region" description="Low complexity" evidence="5">
    <location>
        <begin position="137"/>
        <end position="146"/>
    </location>
</feature>
<feature type="compositionally biased region" description="Basic and acidic residues" evidence="5">
    <location>
        <begin position="228"/>
        <end position="242"/>
    </location>
</feature>
<feature type="compositionally biased region" description="Basic and acidic residues" evidence="5">
    <location>
        <begin position="253"/>
        <end position="268"/>
    </location>
</feature>
<feature type="compositionally biased region" description="Low complexity" evidence="5">
    <location>
        <begin position="933"/>
        <end position="942"/>
    </location>
</feature>
<feature type="compositionally biased region" description="Pro residues" evidence="5">
    <location>
        <begin position="943"/>
        <end position="952"/>
    </location>
</feature>
<feature type="compositionally biased region" description="Polar residues" evidence="5">
    <location>
        <begin position="953"/>
        <end position="964"/>
    </location>
</feature>
<feature type="binding site" evidence="4">
    <location>
        <begin position="155"/>
        <end position="162"/>
    </location>
    <ligand>
        <name>ATP</name>
        <dbReference type="ChEBI" id="CHEBI:30616"/>
    </ligand>
</feature>
<feature type="binding site" evidence="1">
    <location>
        <position position="388"/>
    </location>
    <ligand>
        <name>[4Fe-4S] cluster</name>
        <dbReference type="ChEBI" id="CHEBI:49883"/>
    </ligand>
</feature>
<feature type="binding site" evidence="1">
    <location>
        <position position="406"/>
    </location>
    <ligand>
        <name>[4Fe-4S] cluster</name>
        <dbReference type="ChEBI" id="CHEBI:49883"/>
    </ligand>
</feature>
<feature type="binding site" evidence="1">
    <location>
        <position position="420"/>
    </location>
    <ligand>
        <name>[4Fe-4S] cluster</name>
        <dbReference type="ChEBI" id="CHEBI:49883"/>
    </ligand>
</feature>
<feature type="binding site" evidence="1">
    <location>
        <position position="459"/>
    </location>
    <ligand>
        <name>[4Fe-4S] cluster</name>
        <dbReference type="ChEBI" id="CHEBI:49883"/>
    </ligand>
</feature>
<organism>
    <name type="scientific">Neurospora crassa (strain ATCC 24698 / 74-OR23-1A / CBS 708.71 / DSM 1257 / FGSC 987)</name>
    <dbReference type="NCBI Taxonomy" id="367110"/>
    <lineage>
        <taxon>Eukaryota</taxon>
        <taxon>Fungi</taxon>
        <taxon>Dikarya</taxon>
        <taxon>Ascomycota</taxon>
        <taxon>Pezizomycotina</taxon>
        <taxon>Sordariomycetes</taxon>
        <taxon>Sordariomycetidae</taxon>
        <taxon>Sordariales</taxon>
        <taxon>Sordariaceae</taxon>
        <taxon>Neurospora</taxon>
    </lineage>
</organism>
<sequence>MASTLPIPDINVIAPSFIQRDSQNSDNMKPPPTDFNHPYTPYPIQTAFMQTLYSVLDRTVAVSPPTTTNSTNNTAPSATFSSTAATLIPSNPSTSPSTPPLINPTTAPTVHLADRATEPSLSVTPRTTTSKDKDKGPSSSSSVPKGHAQIALFESPTGTGKSLSLICGSLTWLRNHKRLQFDSEIEKIQQQMEASGEPEWMVESAIKRKREELAQKYEEMERTLERIRQKEREMEKEGEEGQARGGKRRKLDRGKGDEEKGGKKKESGGSRGLTASDEDKEFLIGDWRDEGGLDENDPMGQLSKETRELLEKVGMGTAGGKKEANEGPVAEEEIKIFYTSRTHSQLTQFIQELRRPEFPASVPTPNPQEKPAKEIVKQIPLSSRQKLCINPTVNKLGTLAAINERCQSLQQPKTPKDQRCPYLPNAANLKATHEFRDTALATLPDIEDLYQTGKQLQICPYYASRAAIPGAEVITLPYPLLLQKSAREALGIRLEGNIVIIDEAHNIMDAVSNVHAAEIKYTDLKRAKLSLGMYYQRFHQKLTGENKVMVAQLQRVVEALGVYLKTKLDKAALGLKADQEGIVLDTSLLLKTGGADQINLYKLIRYVQESKLAFKIEGYISYCEEEGRDTDDEEAETEIKARQGRPPVLHTLCSFLTALTNLSSEGRIFYEKIPPPRGELQDMKLSYMLLSPTHAFSSIAESARAVILAGGTMSPFEDYKAHLFPDVPPEKITTLSCGHVIPPDNLCVWTLGSIAPNPKVDTGIGEDCFDFTFAKRSNPNMINRLGLVLLNLCSVVPDGVVAFFPSYGYLEEVIGVWKTHEQAMGPKTIWERLESKKALFIDSKTESSEQTLQKYSDVIHSEVRPLSPAGSRVKGAMLLSVIGGKMSEGINFSDRLGRCVVVVGMPYPNPHSPEWLARREYLEANFIKRYTASQQTSTATAPLPAPVIPPPSNTTHYSTNPSSSRNKDKHKPANVRKLAARDSHQFYENATLRAVNQSIGRAIRHQNDYAAIVLIDNRFEKEHVRAKLPGWIREGWDETQRQAKEDGKALKGLQGMMGRVNMFFRGKN</sequence>
<reference key="1">
    <citation type="journal article" date="2003" name="Nature">
        <title>The genome sequence of the filamentous fungus Neurospora crassa.</title>
        <authorList>
            <person name="Galagan J.E."/>
            <person name="Calvo S.E."/>
            <person name="Borkovich K.A."/>
            <person name="Selker E.U."/>
            <person name="Read N.D."/>
            <person name="Jaffe D.B."/>
            <person name="FitzHugh W."/>
            <person name="Ma L.-J."/>
            <person name="Smirnov S."/>
            <person name="Purcell S."/>
            <person name="Rehman B."/>
            <person name="Elkins T."/>
            <person name="Engels R."/>
            <person name="Wang S."/>
            <person name="Nielsen C.B."/>
            <person name="Butler J."/>
            <person name="Endrizzi M."/>
            <person name="Qui D."/>
            <person name="Ianakiev P."/>
            <person name="Bell-Pedersen D."/>
            <person name="Nelson M.A."/>
            <person name="Werner-Washburne M."/>
            <person name="Selitrennikoff C.P."/>
            <person name="Kinsey J.A."/>
            <person name="Braun E.L."/>
            <person name="Zelter A."/>
            <person name="Schulte U."/>
            <person name="Kothe G.O."/>
            <person name="Jedd G."/>
            <person name="Mewes H.-W."/>
            <person name="Staben C."/>
            <person name="Marcotte E."/>
            <person name="Greenberg D."/>
            <person name="Roy A."/>
            <person name="Foley K."/>
            <person name="Naylor J."/>
            <person name="Stange-Thomann N."/>
            <person name="Barrett R."/>
            <person name="Gnerre S."/>
            <person name="Kamal M."/>
            <person name="Kamvysselis M."/>
            <person name="Mauceli E.W."/>
            <person name="Bielke C."/>
            <person name="Rudd S."/>
            <person name="Frishman D."/>
            <person name="Krystofova S."/>
            <person name="Rasmussen C."/>
            <person name="Metzenberg R.L."/>
            <person name="Perkins D.D."/>
            <person name="Kroken S."/>
            <person name="Cogoni C."/>
            <person name="Macino G."/>
            <person name="Catcheside D.E.A."/>
            <person name="Li W."/>
            <person name="Pratt R.J."/>
            <person name="Osmani S.A."/>
            <person name="DeSouza C.P.C."/>
            <person name="Glass N.L."/>
            <person name="Orbach M.J."/>
            <person name="Berglund J.A."/>
            <person name="Voelker R."/>
            <person name="Yarden O."/>
            <person name="Plamann M."/>
            <person name="Seiler S."/>
            <person name="Dunlap J.C."/>
            <person name="Radford A."/>
            <person name="Aramayo R."/>
            <person name="Natvig D.O."/>
            <person name="Alex L.A."/>
            <person name="Mannhaupt G."/>
            <person name="Ebbole D.J."/>
            <person name="Freitag M."/>
            <person name="Paulsen I."/>
            <person name="Sachs M.S."/>
            <person name="Lander E.S."/>
            <person name="Nusbaum C."/>
            <person name="Birren B.W."/>
        </authorList>
    </citation>
    <scope>NUCLEOTIDE SEQUENCE [LARGE SCALE GENOMIC DNA]</scope>
    <source>
        <strain>ATCC 24698 / 74-OR23-1A / CBS 708.71 / DSM 1257 / FGSC 987</strain>
    </source>
</reference>